<evidence type="ECO:0000255" key="1"/>
<evidence type="ECO:0000255" key="2">
    <source>
        <dbReference type="PROSITE-ProRule" id="PRU00067"/>
    </source>
</evidence>
<evidence type="ECO:0000256" key="3">
    <source>
        <dbReference type="SAM" id="MobiDB-lite"/>
    </source>
</evidence>
<evidence type="ECO:0000269" key="4">
    <source>
    </source>
</evidence>
<evidence type="ECO:0000269" key="5">
    <source>
    </source>
</evidence>
<evidence type="ECO:0000269" key="6">
    <source>
    </source>
</evidence>
<evidence type="ECO:0000269" key="7">
    <source>
    </source>
</evidence>
<evidence type="ECO:0000269" key="8">
    <source>
    </source>
</evidence>
<evidence type="ECO:0000269" key="9">
    <source>
    </source>
</evidence>
<evidence type="ECO:0000305" key="10"/>
<evidence type="ECO:0000305" key="11">
    <source>
    </source>
</evidence>
<evidence type="ECO:0007744" key="12">
    <source>
    </source>
</evidence>
<evidence type="ECO:0007744" key="13">
    <source>
    </source>
</evidence>
<evidence type="ECO:0007744" key="14">
    <source>
    </source>
</evidence>
<protein>
    <recommendedName>
        <fullName>Palmitoyltransferase AKR1</fullName>
        <ecNumber>2.3.1.225</ecNumber>
    </recommendedName>
    <alternativeName>
        <fullName>Ankyrin repeat-containing protein AKR1</fullName>
    </alternativeName>
</protein>
<gene>
    <name type="primary">AKR1</name>
    <name type="ordered locus">YDR264C</name>
    <name type="ORF">D9954.9</name>
    <name type="ORF">YD9230B.03C</name>
</gene>
<sequence>MVNELENVPRASTLTNEEQTVDPSNNDSQEDISLGDSNEITSLASLKAIRSGNEEESGNEQVNHNDEAEEDPLLTRYHTACQRGDLATVKEMIHGKLLEVNNDGDSTEHITGLHWASINNRLSVVDFLVSQGADVNARAGALHATPLHWAARYGYVYIVDFLLKHGADPTMTDDQGFNLLHLSVNSSNIMLVLYVLFNVVSKGLLDIDCRDPKGRTSLLWAAYQGDSLTVAELLKFGASIKIADTEGFTPLHWGTVKGQPHVLKYLIQDGADFFQKTDTGKDCFAIAQEMNTVYSLREALTHSGFDYHGYPIKKWFKKSQHAKLVTFITPFLFLGIAFALFSHINPLFVIIVLFLLAIATNKGLNKFVLPSYGRMGVHNVTLLRSPLLSGVFFGTLLWVTIVWFFKVMPRTFSDEQYTNILMLVILVSVFYLFGQLVIMDPGCLPEETDHENVRQTISNLLEIGKFDTKNFCIETWIRKPLRSKFSPLNNAVVARFDHYCPWIFNDVGLKNHKAFIFFITLMESGIFTFLALCLEYFDELEDAHEDTSQKNGKCFILGASDLCSGLIYDRFVFLILLWALLQSIWVASLIFVQAFQICKGMTNTEFNVLMKESKSIGPDGLSFNENFNTTPEGFAPSIDPGEESNDTVLAPVPGSTIRKPRTCFGVCYAVTGMDQWLAVIKETIGIKDSTGHNVYSITSRIPTNYGWKRNVKDFWLTSDINAPLWRRILYPPSGSKALLNGIEVDYFKLYKLPNKDVEQGNDMV</sequence>
<reference key="1">
    <citation type="journal article" date="1996" name="Mol. Cell. Biol.">
        <title>Interactions between the ankyrin repeat-containing protein Akr1p and the pheromone response pathway in Saccharomyces cerevisiae.</title>
        <authorList>
            <person name="Kao L.-R."/>
            <person name="Peterson J."/>
            <person name="Ji R."/>
            <person name="Bender L."/>
            <person name="Bender A."/>
        </authorList>
    </citation>
    <scope>NUCLEOTIDE SEQUENCE [GENOMIC DNA]</scope>
    <scope>FUNCTION</scope>
</reference>
<reference key="2">
    <citation type="journal article" date="1997" name="Nature">
        <title>The nucleotide sequence of Saccharomyces cerevisiae chromosome IV.</title>
        <authorList>
            <person name="Jacq C."/>
            <person name="Alt-Moerbe J."/>
            <person name="Andre B."/>
            <person name="Arnold W."/>
            <person name="Bahr A."/>
            <person name="Ballesta J.P.G."/>
            <person name="Bargues M."/>
            <person name="Baron L."/>
            <person name="Becker A."/>
            <person name="Biteau N."/>
            <person name="Bloecker H."/>
            <person name="Blugeon C."/>
            <person name="Boskovic J."/>
            <person name="Brandt P."/>
            <person name="Brueckner M."/>
            <person name="Buitrago M.J."/>
            <person name="Coster F."/>
            <person name="Delaveau T."/>
            <person name="del Rey F."/>
            <person name="Dujon B."/>
            <person name="Eide L.G."/>
            <person name="Garcia-Cantalejo J.M."/>
            <person name="Goffeau A."/>
            <person name="Gomez-Peris A."/>
            <person name="Granotier C."/>
            <person name="Hanemann V."/>
            <person name="Hankeln T."/>
            <person name="Hoheisel J.D."/>
            <person name="Jaeger W."/>
            <person name="Jimenez A."/>
            <person name="Jonniaux J.-L."/>
            <person name="Kraemer C."/>
            <person name="Kuester H."/>
            <person name="Laamanen P."/>
            <person name="Legros Y."/>
            <person name="Louis E.J."/>
            <person name="Moeller-Rieker S."/>
            <person name="Monnet A."/>
            <person name="Moro M."/>
            <person name="Mueller-Auer S."/>
            <person name="Nussbaumer B."/>
            <person name="Paricio N."/>
            <person name="Paulin L."/>
            <person name="Perea J."/>
            <person name="Perez-Alonso M."/>
            <person name="Perez-Ortin J.E."/>
            <person name="Pohl T.M."/>
            <person name="Prydz H."/>
            <person name="Purnelle B."/>
            <person name="Rasmussen S.W."/>
            <person name="Remacha M.A."/>
            <person name="Revuelta J.L."/>
            <person name="Rieger M."/>
            <person name="Salom D."/>
            <person name="Saluz H.P."/>
            <person name="Saiz J.E."/>
            <person name="Saren A.-M."/>
            <person name="Schaefer M."/>
            <person name="Scharfe M."/>
            <person name="Schmidt E.R."/>
            <person name="Schneider C."/>
            <person name="Scholler P."/>
            <person name="Schwarz S."/>
            <person name="Soler-Mira A."/>
            <person name="Urrestarazu L.A."/>
            <person name="Verhasselt P."/>
            <person name="Vissers S."/>
            <person name="Voet M."/>
            <person name="Volckaert G."/>
            <person name="Wagner G."/>
            <person name="Wambutt R."/>
            <person name="Wedler E."/>
            <person name="Wedler H."/>
            <person name="Woelfl S."/>
            <person name="Harris D.E."/>
            <person name="Bowman S."/>
            <person name="Brown D."/>
            <person name="Churcher C.M."/>
            <person name="Connor R."/>
            <person name="Dedman K."/>
            <person name="Gentles S."/>
            <person name="Hamlin N."/>
            <person name="Hunt S."/>
            <person name="Jones L."/>
            <person name="McDonald S."/>
            <person name="Murphy L.D."/>
            <person name="Niblett D."/>
            <person name="Odell C."/>
            <person name="Oliver K."/>
            <person name="Rajandream M.A."/>
            <person name="Richards C."/>
            <person name="Shore L."/>
            <person name="Walsh S.V."/>
            <person name="Barrell B.G."/>
            <person name="Dietrich F.S."/>
            <person name="Mulligan J.T."/>
            <person name="Allen E."/>
            <person name="Araujo R."/>
            <person name="Aviles E."/>
            <person name="Berno A."/>
            <person name="Carpenter J."/>
            <person name="Chen E."/>
            <person name="Cherry J.M."/>
            <person name="Chung E."/>
            <person name="Duncan M."/>
            <person name="Hunicke-Smith S."/>
            <person name="Hyman R.W."/>
            <person name="Komp C."/>
            <person name="Lashkari D."/>
            <person name="Lew H."/>
            <person name="Lin D."/>
            <person name="Mosedale D."/>
            <person name="Nakahara K."/>
            <person name="Namath A."/>
            <person name="Oefner P."/>
            <person name="Oh C."/>
            <person name="Petel F.X."/>
            <person name="Roberts D."/>
            <person name="Schramm S."/>
            <person name="Schroeder M."/>
            <person name="Shogren T."/>
            <person name="Shroff N."/>
            <person name="Winant A."/>
            <person name="Yelton M.A."/>
            <person name="Botstein D."/>
            <person name="Davis R.W."/>
            <person name="Johnston M."/>
            <person name="Andrews S."/>
            <person name="Brinkman R."/>
            <person name="Cooper J."/>
            <person name="Ding H."/>
            <person name="Du Z."/>
            <person name="Favello A."/>
            <person name="Fulton L."/>
            <person name="Gattung S."/>
            <person name="Greco T."/>
            <person name="Hallsworth K."/>
            <person name="Hawkins J."/>
            <person name="Hillier L.W."/>
            <person name="Jier M."/>
            <person name="Johnson D."/>
            <person name="Johnston L."/>
            <person name="Kirsten J."/>
            <person name="Kucaba T."/>
            <person name="Langston Y."/>
            <person name="Latreille P."/>
            <person name="Le T."/>
            <person name="Mardis E."/>
            <person name="Menezes S."/>
            <person name="Miller N."/>
            <person name="Nhan M."/>
            <person name="Pauley A."/>
            <person name="Peluso D."/>
            <person name="Rifkin L."/>
            <person name="Riles L."/>
            <person name="Taich A."/>
            <person name="Trevaskis E."/>
            <person name="Vignati D."/>
            <person name="Wilcox L."/>
            <person name="Wohldman P."/>
            <person name="Vaudin M."/>
            <person name="Wilson R."/>
            <person name="Waterston R."/>
            <person name="Albermann K."/>
            <person name="Hani J."/>
            <person name="Heumann K."/>
            <person name="Kleine K."/>
            <person name="Mewes H.-W."/>
            <person name="Zollner A."/>
            <person name="Zaccaria P."/>
        </authorList>
    </citation>
    <scope>NUCLEOTIDE SEQUENCE [LARGE SCALE GENOMIC DNA]</scope>
    <source>
        <strain>ATCC 204508 / S288c</strain>
    </source>
</reference>
<reference key="3">
    <citation type="journal article" date="2014" name="G3 (Bethesda)">
        <title>The reference genome sequence of Saccharomyces cerevisiae: Then and now.</title>
        <authorList>
            <person name="Engel S.R."/>
            <person name="Dietrich F.S."/>
            <person name="Fisk D.G."/>
            <person name="Binkley G."/>
            <person name="Balakrishnan R."/>
            <person name="Costanzo M.C."/>
            <person name="Dwight S.S."/>
            <person name="Hitz B.C."/>
            <person name="Karra K."/>
            <person name="Nash R.S."/>
            <person name="Weng S."/>
            <person name="Wong E.D."/>
            <person name="Lloyd P."/>
            <person name="Skrzypek M.S."/>
            <person name="Miyasato S.R."/>
            <person name="Simison M."/>
            <person name="Cherry J.M."/>
        </authorList>
    </citation>
    <scope>GENOME REANNOTATION</scope>
    <source>
        <strain>ATCC 204508 / S288c</strain>
    </source>
</reference>
<reference key="4">
    <citation type="journal article" date="1997" name="Mol. Biol. Cell">
        <title>The ankyrin repeat-containing protein Akr1p is required for the endocytosis of yeast pheromone receptors.</title>
        <authorList>
            <person name="Givan S.A."/>
            <person name="Sprague G.F. Jr."/>
        </authorList>
    </citation>
    <scope>FUNCTION</scope>
</reference>
<reference key="5">
    <citation type="journal article" date="2000" name="Mol. Cell. Biol.">
        <title>Akr1p and the type I casein kinases act prior to the ubiquitination step of yeast endocytosis: Akr1p is required for kinase localization to the plasma membrane.</title>
        <authorList>
            <person name="Feng Y."/>
            <person name="Davis N.G."/>
        </authorList>
    </citation>
    <scope>FUNCTION</scope>
</reference>
<reference key="6">
    <citation type="journal article" date="2002" name="J. Cell Biol.">
        <title>The yeast DHHC cysteine-rich domain protein Akr1p is a palmitoyl transferase.</title>
        <authorList>
            <person name="Roth A.F."/>
            <person name="Feng Y."/>
            <person name="Chen L."/>
            <person name="Davis N.G."/>
        </authorList>
    </citation>
    <scope>FUNCTION</scope>
    <scope>SUBCELLULAR LOCATION</scope>
    <scope>ACTIVE SITE</scope>
    <scope>MUTAGENESIS OF 497-ASP--HIS-498 AND CYS-500</scope>
</reference>
<reference key="7">
    <citation type="journal article" date="2003" name="Nature">
        <title>Global analysis of protein localization in budding yeast.</title>
        <authorList>
            <person name="Huh W.-K."/>
            <person name="Falvo J.V."/>
            <person name="Gerke L.C."/>
            <person name="Carroll A.S."/>
            <person name="Howson R.W."/>
            <person name="Weissman J.S."/>
            <person name="O'Shea E.K."/>
        </authorList>
    </citation>
    <scope>SUBCELLULAR LOCATION [LARGE SCALE ANALYSIS]</scope>
</reference>
<reference key="8">
    <citation type="journal article" date="2003" name="Nature">
        <title>Global analysis of protein expression in yeast.</title>
        <authorList>
            <person name="Ghaemmaghami S."/>
            <person name="Huh W.-K."/>
            <person name="Bower K."/>
            <person name="Howson R.W."/>
            <person name="Belle A."/>
            <person name="Dephoure N."/>
            <person name="O'Shea E.K."/>
            <person name="Weissman J.S."/>
        </authorList>
    </citation>
    <scope>LEVEL OF PROTEIN EXPRESSION [LARGE SCALE ANALYSIS]</scope>
</reference>
<reference key="9">
    <citation type="journal article" date="2004" name="J. Biol. Chem.">
        <title>Akr1p-dependent palmitoylation of Yck2p yeast casein kinase 1 is necessary and sufficient for plasma membrane targeting.</title>
        <authorList>
            <person name="Babu P."/>
            <person name="Deschenes R.J."/>
            <person name="Robinson L.C."/>
        </authorList>
    </citation>
    <scope>FUNCTION</scope>
</reference>
<reference key="10">
    <citation type="journal article" date="2005" name="J. Biol. Chem.">
        <title>Transmembrane topology of the protein palmitoyl transferase Akr1.</title>
        <authorList>
            <person name="Politis E.G."/>
            <person name="Roth A.F."/>
            <person name="Davis N.G."/>
        </authorList>
    </citation>
    <scope>TOPOLOGY</scope>
</reference>
<reference key="11">
    <citation type="journal article" date="2006" name="Proc. Natl. Acad. Sci. U.S.A.">
        <title>A global topology map of the Saccharomyces cerevisiae membrane proteome.</title>
        <authorList>
            <person name="Kim H."/>
            <person name="Melen K."/>
            <person name="Oesterberg M."/>
            <person name="von Heijne G."/>
        </authorList>
    </citation>
    <scope>TOPOLOGY [LARGE SCALE ANALYSIS]</scope>
    <source>
        <strain>ATCC 208353 / W303-1A</strain>
    </source>
</reference>
<reference key="12">
    <citation type="journal article" date="2007" name="J. Proteome Res.">
        <title>Large-scale phosphorylation analysis of alpha-factor-arrested Saccharomyces cerevisiae.</title>
        <authorList>
            <person name="Li X."/>
            <person name="Gerber S.A."/>
            <person name="Rudner A.D."/>
            <person name="Beausoleil S.A."/>
            <person name="Haas W."/>
            <person name="Villen J."/>
            <person name="Elias J.E."/>
            <person name="Gygi S.P."/>
        </authorList>
    </citation>
    <scope>PHOSPHORYLATION [LARGE SCALE ANALYSIS] AT SER-51 AND SER-57</scope>
    <scope>IDENTIFICATION BY MASS SPECTROMETRY [LARGE SCALE ANALYSIS]</scope>
    <source>
        <strain>ADR376</strain>
    </source>
</reference>
<reference key="13">
    <citation type="journal article" date="2008" name="Mol. Cell. Proteomics">
        <title>A multidimensional chromatography technology for in-depth phosphoproteome analysis.</title>
        <authorList>
            <person name="Albuquerque C.P."/>
            <person name="Smolka M.B."/>
            <person name="Payne S.H."/>
            <person name="Bafna V."/>
            <person name="Eng J."/>
            <person name="Zhou H."/>
        </authorList>
    </citation>
    <scope>PHOSPHORYLATION [LARGE SCALE ANALYSIS] AT SER-51 AND SER-57</scope>
    <scope>IDENTIFICATION BY MASS SPECTROMETRY [LARGE SCALE ANALYSIS]</scope>
</reference>
<reference key="14">
    <citation type="journal article" date="2009" name="Science">
        <title>Global analysis of Cdk1 substrate phosphorylation sites provides insights into evolution.</title>
        <authorList>
            <person name="Holt L.J."/>
            <person name="Tuch B.B."/>
            <person name="Villen J."/>
            <person name="Johnson A.D."/>
            <person name="Gygi S.P."/>
            <person name="Morgan D.O."/>
        </authorList>
    </citation>
    <scope>PHOSPHORYLATION [LARGE SCALE ANALYSIS] AT SER-51 AND SER-57</scope>
    <scope>IDENTIFICATION BY MASS SPECTROMETRY [LARGE SCALE ANALYSIS]</scope>
</reference>
<reference key="15">
    <citation type="journal article" date="2012" name="Proc. Natl. Acad. Sci. U.S.A.">
        <title>N-terminal acetylome analyses and functional insights of the N-terminal acetyltransferase NatB.</title>
        <authorList>
            <person name="Van Damme P."/>
            <person name="Lasa M."/>
            <person name="Polevoda B."/>
            <person name="Gazquez C."/>
            <person name="Elosegui-Artola A."/>
            <person name="Kim D.S."/>
            <person name="De Juan-Pardo E."/>
            <person name="Demeyer K."/>
            <person name="Hole K."/>
            <person name="Larrea E."/>
            <person name="Timmerman E."/>
            <person name="Prieto J."/>
            <person name="Arnesen T."/>
            <person name="Sherman F."/>
            <person name="Gevaert K."/>
            <person name="Aldabe R."/>
        </authorList>
    </citation>
    <scope>IDENTIFICATION BY MASS SPECTROMETRY [LARGE SCALE ANALYSIS]</scope>
</reference>
<dbReference type="EC" id="2.3.1.225"/>
<dbReference type="EMBL" id="L31407">
    <property type="protein sequence ID" value="AAC41676.1"/>
    <property type="molecule type" value="Genomic_DNA"/>
</dbReference>
<dbReference type="EMBL" id="U51030">
    <property type="protein sequence ID" value="AAB64454.1"/>
    <property type="molecule type" value="Genomic_DNA"/>
</dbReference>
<dbReference type="EMBL" id="Z70202">
    <property type="protein sequence ID" value="CAA94103.1"/>
    <property type="molecule type" value="Genomic_DNA"/>
</dbReference>
<dbReference type="EMBL" id="Z68290">
    <property type="protein sequence ID" value="CAA92582.1"/>
    <property type="molecule type" value="Genomic_DNA"/>
</dbReference>
<dbReference type="EMBL" id="BK006938">
    <property type="protein sequence ID" value="DAA12108.1"/>
    <property type="molecule type" value="Genomic_DNA"/>
</dbReference>
<dbReference type="PIR" id="S48521">
    <property type="entry name" value="S48521"/>
</dbReference>
<dbReference type="RefSeq" id="NP_010550.1">
    <property type="nucleotide sequence ID" value="NM_001180572.1"/>
</dbReference>
<dbReference type="SMR" id="P39010"/>
<dbReference type="BioGRID" id="32320">
    <property type="interactions" value="213"/>
</dbReference>
<dbReference type="DIP" id="DIP-1145N"/>
<dbReference type="FunCoup" id="P39010">
    <property type="interactions" value="691"/>
</dbReference>
<dbReference type="IntAct" id="P39010">
    <property type="interactions" value="61"/>
</dbReference>
<dbReference type="MINT" id="P39010"/>
<dbReference type="STRING" id="4932.YDR264C"/>
<dbReference type="iPTMnet" id="P39010"/>
<dbReference type="SwissPalm" id="P39010"/>
<dbReference type="PaxDb" id="4932-YDR264C"/>
<dbReference type="PeptideAtlas" id="P39010"/>
<dbReference type="EnsemblFungi" id="YDR264C_mRNA">
    <property type="protein sequence ID" value="YDR264C"/>
    <property type="gene ID" value="YDR264C"/>
</dbReference>
<dbReference type="GeneID" id="851857"/>
<dbReference type="KEGG" id="sce:YDR264C"/>
<dbReference type="AGR" id="SGD:S000002672"/>
<dbReference type="SGD" id="S000002672">
    <property type="gene designation" value="AKR1"/>
</dbReference>
<dbReference type="VEuPathDB" id="FungiDB:YDR264C"/>
<dbReference type="eggNOG" id="KOG0509">
    <property type="taxonomic scope" value="Eukaryota"/>
</dbReference>
<dbReference type="GeneTree" id="ENSGT00530000063074"/>
<dbReference type="HOGENOM" id="CLU_012510_1_1_1"/>
<dbReference type="InParanoid" id="P39010"/>
<dbReference type="OMA" id="FWVGFRY"/>
<dbReference type="OrthoDB" id="6781668at2759"/>
<dbReference type="BioCyc" id="YEAST:G3O-29834-MONOMER"/>
<dbReference type="BRENDA" id="2.3.1.225">
    <property type="organism ID" value="984"/>
</dbReference>
<dbReference type="BioGRID-ORCS" id="851857">
    <property type="hits" value="2 hits in 10 CRISPR screens"/>
</dbReference>
<dbReference type="PRO" id="PR:P39010"/>
<dbReference type="Proteomes" id="UP000002311">
    <property type="component" value="Chromosome IV"/>
</dbReference>
<dbReference type="RNAct" id="P39010">
    <property type="molecule type" value="protein"/>
</dbReference>
<dbReference type="GO" id="GO:0031901">
    <property type="term" value="C:early endosome membrane"/>
    <property type="evidence" value="ECO:0007669"/>
    <property type="project" value="UniProtKB-SubCell"/>
</dbReference>
<dbReference type="GO" id="GO:0005794">
    <property type="term" value="C:Golgi apparatus"/>
    <property type="evidence" value="ECO:0000314"/>
    <property type="project" value="SGD"/>
</dbReference>
<dbReference type="GO" id="GO:0000139">
    <property type="term" value="C:Golgi membrane"/>
    <property type="evidence" value="ECO:0007669"/>
    <property type="project" value="UniProtKB-SubCell"/>
</dbReference>
<dbReference type="GO" id="GO:0031683">
    <property type="term" value="F:G-protein beta/gamma-subunit complex binding"/>
    <property type="evidence" value="ECO:0000353"/>
    <property type="project" value="SGD"/>
</dbReference>
<dbReference type="GO" id="GO:0016409">
    <property type="term" value="F:palmitoyltransferase activity"/>
    <property type="evidence" value="ECO:0000314"/>
    <property type="project" value="UniProtKB"/>
</dbReference>
<dbReference type="GO" id="GO:0019706">
    <property type="term" value="F:protein-cysteine S-palmitoyltransferase activity"/>
    <property type="evidence" value="ECO:0007669"/>
    <property type="project" value="UniProtKB-EC"/>
</dbReference>
<dbReference type="GO" id="GO:0090029">
    <property type="term" value="P:negative regulation of pheromone-dependent signal transduction involved in conjugation with cellular fusion"/>
    <property type="evidence" value="ECO:0000315"/>
    <property type="project" value="SGD"/>
</dbReference>
<dbReference type="GO" id="GO:0018345">
    <property type="term" value="P:protein palmitoylation"/>
    <property type="evidence" value="ECO:0000314"/>
    <property type="project" value="UniProtKB"/>
</dbReference>
<dbReference type="GO" id="GO:0006612">
    <property type="term" value="P:protein targeting to membrane"/>
    <property type="evidence" value="ECO:0000315"/>
    <property type="project" value="SGD"/>
</dbReference>
<dbReference type="GO" id="GO:0030100">
    <property type="term" value="P:regulation of endocytosis"/>
    <property type="evidence" value="ECO:0000315"/>
    <property type="project" value="SGD"/>
</dbReference>
<dbReference type="FunFam" id="1.25.40.20:FF:000301">
    <property type="entry name" value="Palmitoyltransferase"/>
    <property type="match status" value="1"/>
</dbReference>
<dbReference type="Gene3D" id="1.25.40.20">
    <property type="entry name" value="Ankyrin repeat-containing domain"/>
    <property type="match status" value="1"/>
</dbReference>
<dbReference type="InterPro" id="IPR002110">
    <property type="entry name" value="Ankyrin_rpt"/>
</dbReference>
<dbReference type="InterPro" id="IPR036770">
    <property type="entry name" value="Ankyrin_rpt-contain_sf"/>
</dbReference>
<dbReference type="InterPro" id="IPR001594">
    <property type="entry name" value="Palmitoyltrfase_DHHC"/>
</dbReference>
<dbReference type="PANTHER" id="PTHR24161">
    <property type="entry name" value="ANK_REP_REGION DOMAIN-CONTAINING PROTEIN-RELATED"/>
    <property type="match status" value="1"/>
</dbReference>
<dbReference type="PANTHER" id="PTHR24161:SF85">
    <property type="entry name" value="PALMITOYLTRANSFERASE HIP14"/>
    <property type="match status" value="1"/>
</dbReference>
<dbReference type="Pfam" id="PF12796">
    <property type="entry name" value="Ank_2"/>
    <property type="match status" value="2"/>
</dbReference>
<dbReference type="Pfam" id="PF01529">
    <property type="entry name" value="DHHC"/>
    <property type="match status" value="1"/>
</dbReference>
<dbReference type="SMART" id="SM00248">
    <property type="entry name" value="ANK"/>
    <property type="match status" value="6"/>
</dbReference>
<dbReference type="SUPFAM" id="SSF48403">
    <property type="entry name" value="Ankyrin repeat"/>
    <property type="match status" value="1"/>
</dbReference>
<dbReference type="PROSITE" id="PS50297">
    <property type="entry name" value="ANK_REP_REGION"/>
    <property type="match status" value="1"/>
</dbReference>
<dbReference type="PROSITE" id="PS50088">
    <property type="entry name" value="ANK_REPEAT"/>
    <property type="match status" value="4"/>
</dbReference>
<dbReference type="PROSITE" id="PS50216">
    <property type="entry name" value="DHHC"/>
    <property type="match status" value="1"/>
</dbReference>
<accession>P39010</accession>
<accession>D6VSP8</accession>
<organism>
    <name type="scientific">Saccharomyces cerevisiae (strain ATCC 204508 / S288c)</name>
    <name type="common">Baker's yeast</name>
    <dbReference type="NCBI Taxonomy" id="559292"/>
    <lineage>
        <taxon>Eukaryota</taxon>
        <taxon>Fungi</taxon>
        <taxon>Dikarya</taxon>
        <taxon>Ascomycota</taxon>
        <taxon>Saccharomycotina</taxon>
        <taxon>Saccharomycetes</taxon>
        <taxon>Saccharomycetales</taxon>
        <taxon>Saccharomycetaceae</taxon>
        <taxon>Saccharomyces</taxon>
    </lineage>
</organism>
<comment type="function">
    <text evidence="4 5 7 8 9">Palmitoyltransferase specific for casein kinase 1. Palmitoylates isoforms YCK1 and YCK2 at both C-terminal cysteine residues, which is required for their proper plasma membrane localization. Required for constitutive endocytosis of a-factor receptor STE3 and both constitutive and pheromone-induced endocytosis of alpha-factor receptor STE2.</text>
</comment>
<comment type="catalytic activity">
    <reaction>
        <text>L-cysteinyl-[protein] + hexadecanoyl-CoA = S-hexadecanoyl-L-cysteinyl-[protein] + CoA</text>
        <dbReference type="Rhea" id="RHEA:36683"/>
        <dbReference type="Rhea" id="RHEA-COMP:10131"/>
        <dbReference type="Rhea" id="RHEA-COMP:11032"/>
        <dbReference type="ChEBI" id="CHEBI:29950"/>
        <dbReference type="ChEBI" id="CHEBI:57287"/>
        <dbReference type="ChEBI" id="CHEBI:57379"/>
        <dbReference type="ChEBI" id="CHEBI:74151"/>
        <dbReference type="EC" id="2.3.1.225"/>
    </reaction>
</comment>
<comment type="interaction">
    <interactant intactId="EBI-2421">
        <id>P39010</id>
    </interactant>
    <interactant intactId="EBI-9653">
        <id>P09620</id>
        <label>KEX1</label>
    </interactant>
    <organismsDiffer>false</organismsDiffer>
    <experiments>3</experiments>
</comment>
<comment type="interaction">
    <interactant intactId="EBI-2421">
        <id>P39010</id>
    </interactant>
    <interactant intactId="EBI-31471">
        <id>Q12270</id>
        <label>RBD2</label>
    </interactant>
    <organismsDiffer>false</organismsDiffer>
    <experiments>3</experiments>
</comment>
<comment type="interaction">
    <interactant intactId="EBI-2421">
        <id>P39010</id>
    </interactant>
    <interactant intactId="EBI-7390">
        <id>P18851</id>
        <label>STE4</label>
    </interactant>
    <organismsDiffer>false</organismsDiffer>
    <experiments>4</experiments>
</comment>
<comment type="subcellular location">
    <subcellularLocation>
        <location>Early endosome membrane</location>
        <topology>Multi-pass membrane protein</topology>
    </subcellularLocation>
    <subcellularLocation>
        <location>Golgi apparatus membrane</location>
        <topology>Multi-pass membrane protein</topology>
    </subcellularLocation>
</comment>
<comment type="domain">
    <text>The DHHC domain is required for palmitoyltransferase activity.</text>
</comment>
<comment type="miscellaneous">
    <text evidence="6">Present with 4072 molecules/cell in log phase SD medium.</text>
</comment>
<comment type="similarity">
    <text evidence="10">Belongs to the DHHC palmitoyltransferase family. AKR/ZDHHC17 subfamily.</text>
</comment>
<feature type="chain" id="PRO_0000212934" description="Palmitoyltransferase AKR1">
    <location>
        <begin position="1"/>
        <end position="764"/>
    </location>
</feature>
<feature type="topological domain" description="Cytoplasmic">
    <location>
        <begin position="1"/>
        <end position="321"/>
    </location>
</feature>
<feature type="transmembrane region" description="Helical" evidence="1">
    <location>
        <begin position="322"/>
        <end position="341"/>
    </location>
</feature>
<feature type="topological domain" description="Lumenal">
    <location>
        <begin position="342"/>
        <end position="346"/>
    </location>
</feature>
<feature type="transmembrane region" description="Helical" evidence="1">
    <location>
        <begin position="347"/>
        <end position="364"/>
    </location>
</feature>
<feature type="topological domain" description="Cytoplasmic">
    <location>
        <begin position="365"/>
        <end position="384"/>
    </location>
</feature>
<feature type="transmembrane region" description="Helical" evidence="1">
    <location>
        <begin position="385"/>
        <end position="405"/>
    </location>
</feature>
<feature type="topological domain" description="Lumenal">
    <location>
        <begin position="406"/>
        <end position="418"/>
    </location>
</feature>
<feature type="transmembrane region" description="Helical" evidence="1">
    <location>
        <begin position="419"/>
        <end position="439"/>
    </location>
</feature>
<feature type="topological domain" description="Cytoplasmic">
    <location>
        <begin position="440"/>
        <end position="513"/>
    </location>
</feature>
<feature type="transmembrane region" description="Helical" evidence="1">
    <location>
        <begin position="514"/>
        <end position="534"/>
    </location>
</feature>
<feature type="topological domain" description="Lumenal">
    <location>
        <begin position="535"/>
        <end position="570"/>
    </location>
</feature>
<feature type="transmembrane region" description="Helical" evidence="1">
    <location>
        <begin position="571"/>
        <end position="591"/>
    </location>
</feature>
<feature type="topological domain" description="Cytoplasmic">
    <location>
        <begin position="592"/>
        <end position="764"/>
    </location>
</feature>
<feature type="repeat" description="ANK 1">
    <location>
        <begin position="72"/>
        <end position="102"/>
    </location>
</feature>
<feature type="repeat" description="ANK 2">
    <location>
        <begin position="108"/>
        <end position="137"/>
    </location>
</feature>
<feature type="repeat" description="ANK 3">
    <location>
        <begin position="142"/>
        <end position="171"/>
    </location>
</feature>
<feature type="repeat" description="ANK 4">
    <location>
        <begin position="175"/>
        <end position="204"/>
    </location>
</feature>
<feature type="repeat" description="ANK 5">
    <location>
        <begin position="213"/>
        <end position="242"/>
    </location>
</feature>
<feature type="repeat" description="ANK 6">
    <location>
        <begin position="246"/>
        <end position="275"/>
    </location>
</feature>
<feature type="domain" description="DHHC" evidence="2">
    <location>
        <begin position="470"/>
        <end position="520"/>
    </location>
</feature>
<feature type="region of interest" description="Disordered" evidence="3">
    <location>
        <begin position="1"/>
        <end position="38"/>
    </location>
</feature>
<feature type="region of interest" description="Disordered" evidence="3">
    <location>
        <begin position="51"/>
        <end position="71"/>
    </location>
</feature>
<feature type="compositionally biased region" description="Polar residues" evidence="3">
    <location>
        <begin position="10"/>
        <end position="27"/>
    </location>
</feature>
<feature type="active site" description="S-palmitoyl cysteine intermediate" evidence="11">
    <location>
        <position position="500"/>
    </location>
</feature>
<feature type="modified residue" description="Phosphoserine" evidence="12 13 14">
    <location>
        <position position="51"/>
    </location>
</feature>
<feature type="modified residue" description="Phosphoserine" evidence="12 13 14">
    <location>
        <position position="57"/>
    </location>
</feature>
<feature type="mutagenesis site" description="Abolishes YCK2 palmitoylation." evidence="5">
    <original>DH</original>
    <variation>AA</variation>
    <location>
        <begin position="497"/>
        <end position="498"/>
    </location>
</feature>
<feature type="mutagenesis site" description="Abolishes YCK2 palmitoylation." evidence="5">
    <original>C</original>
    <variation>A</variation>
    <location>
        <position position="500"/>
    </location>
</feature>
<keyword id="KW-0012">Acyltransferase</keyword>
<keyword id="KW-0040">ANK repeat</keyword>
<keyword id="KW-0967">Endosome</keyword>
<keyword id="KW-0333">Golgi apparatus</keyword>
<keyword id="KW-0449">Lipoprotein</keyword>
<keyword id="KW-0472">Membrane</keyword>
<keyword id="KW-0564">Palmitate</keyword>
<keyword id="KW-0597">Phosphoprotein</keyword>
<keyword id="KW-1185">Reference proteome</keyword>
<keyword id="KW-0677">Repeat</keyword>
<keyword id="KW-0808">Transferase</keyword>
<keyword id="KW-0812">Transmembrane</keyword>
<keyword id="KW-1133">Transmembrane helix</keyword>
<proteinExistence type="evidence at protein level"/>
<name>AKR1_YEAST</name>